<protein>
    <recommendedName>
        <fullName>Inhibitor of apoptosis protein</fullName>
        <shortName>IAP</shortName>
    </recommendedName>
</protein>
<organismHost>
    <name type="scientific">Ornithodoros</name>
    <name type="common">relapsing fever ticks</name>
    <dbReference type="NCBI Taxonomy" id="6937"/>
</organismHost>
<organismHost>
    <name type="scientific">Phacochoerus aethiopicus</name>
    <name type="common">Warthog</name>
    <dbReference type="NCBI Taxonomy" id="85517"/>
</organismHost>
<organismHost>
    <name type="scientific">Phacochoerus africanus</name>
    <name type="common">Warthog</name>
    <dbReference type="NCBI Taxonomy" id="41426"/>
</organismHost>
<organismHost>
    <name type="scientific">Potamochoerus larvatus</name>
    <name type="common">Bushpig</name>
    <dbReference type="NCBI Taxonomy" id="273792"/>
</organismHost>
<organismHost>
    <name type="scientific">Sus scrofa</name>
    <name type="common">Pig</name>
    <dbReference type="NCBI Taxonomy" id="9823"/>
</organismHost>
<gene>
    <name type="ordered locus">Pret-046</name>
</gene>
<comment type="function">
    <text evidence="2">Prevent apoptosis of host cell by inhibiting caspase-3/CASP3 activation to promote the viral replication. Also induces the activation of host NF-kappaB.</text>
</comment>
<comment type="subunit">
    <text evidence="2">Interacts with subunit p17 of host CASP3.</text>
</comment>
<comment type="subcellular location">
    <subcellularLocation>
        <location evidence="2">Host cytoplasm</location>
    </subcellularLocation>
    <subcellularLocation>
        <location evidence="2">Virion</location>
    </subcellularLocation>
    <text evidence="2">Probably accumulates in the perinuclear cytoplasmic viral factories. Found in association with viral nucleoid.</text>
</comment>
<comment type="induction">
    <text evidence="5">Expressed in the late phase of the viral replicative cycle.</text>
</comment>
<comment type="similarity">
    <text evidence="5">Belongs to the asfivirus IAP family.</text>
</comment>
<keyword id="KW-1074">Activation of host NF-kappa-B by virus</keyword>
<keyword id="KW-1035">Host cytoplasm</keyword>
<keyword id="KW-0945">Host-virus interaction</keyword>
<keyword id="KW-1085">Inhibition of host caspases by virus</keyword>
<keyword id="KW-0426">Late protein</keyword>
<keyword id="KW-0479">Metal-binding</keyword>
<keyword id="KW-1119">Modulation of host cell apoptosis by virus</keyword>
<keyword id="KW-0946">Virion</keyword>
<keyword id="KW-0862">Zinc</keyword>
<keyword id="KW-0863">Zinc-finger</keyword>
<name>IAP_ASFP4</name>
<reference key="1">
    <citation type="submission" date="2003-03" db="EMBL/GenBank/DDBJ databases">
        <title>African swine fever virus genomes.</title>
        <authorList>
            <person name="Kutish G.F."/>
            <person name="Rock D.L."/>
        </authorList>
    </citation>
    <scope>NUCLEOTIDE SEQUENCE [LARGE SCALE GENOMIC DNA]</scope>
</reference>
<sequence length="224" mass="26558">MFPKINTIDPYISLRLFEVKPKYVGYSSVDARNQSFAIHDIKNYEKFSNAGLFYTSPTEITCYCCGMKFCNWLYEKHPLQVHGFWSRNCGFMRATLGIIGLKKMIDSYNDYYNNEVFVKHKNRVYTHKKLEDMGFSKPFMQFILANAFIPPYRKYIHKIILNDRYFTFKFAAHLLSFHKVNLDNQTTYCMTCGIEPIKKDENFCNACKTLNYKHYKTLNFSVKL</sequence>
<proteinExistence type="inferred from homology"/>
<evidence type="ECO:0000250" key="1">
    <source>
        <dbReference type="UniProtKB" id="O11453"/>
    </source>
</evidence>
<evidence type="ECO:0000250" key="2">
    <source>
        <dbReference type="UniProtKB" id="P69180"/>
    </source>
</evidence>
<evidence type="ECO:0000255" key="3"/>
<evidence type="ECO:0000255" key="4">
    <source>
        <dbReference type="PROSITE-ProRule" id="PRU00029"/>
    </source>
</evidence>
<evidence type="ECO:0000305" key="5"/>
<accession>P0C9X5</accession>
<feature type="chain" id="PRO_0000373381" description="Inhibitor of apoptosis protein">
    <location>
        <begin position="1"/>
        <end position="224"/>
    </location>
</feature>
<feature type="repeat" description="BIR" evidence="1">
    <location>
        <begin position="29"/>
        <end position="92"/>
    </location>
</feature>
<feature type="zinc finger region" description="C4-type" evidence="3">
    <location>
        <begin position="189"/>
        <end position="207"/>
    </location>
</feature>
<feature type="binding site" evidence="4">
    <location>
        <position position="62"/>
    </location>
    <ligand>
        <name>Zn(2+)</name>
        <dbReference type="ChEBI" id="CHEBI:29105"/>
    </ligand>
</feature>
<feature type="binding site" evidence="4">
    <location>
        <position position="65"/>
    </location>
    <ligand>
        <name>Zn(2+)</name>
        <dbReference type="ChEBI" id="CHEBI:29105"/>
    </ligand>
</feature>
<feature type="binding site" evidence="4">
    <location>
        <position position="82"/>
    </location>
    <ligand>
        <name>Zn(2+)</name>
        <dbReference type="ChEBI" id="CHEBI:29105"/>
    </ligand>
</feature>
<feature type="binding site" evidence="4">
    <location>
        <position position="89"/>
    </location>
    <ligand>
        <name>Zn(2+)</name>
        <dbReference type="ChEBI" id="CHEBI:29105"/>
    </ligand>
</feature>
<organism>
    <name type="scientific">African swine fever virus (isolate Tick/South Africa/Pretoriuskop Pr4/1996)</name>
    <name type="common">ASFV</name>
    <dbReference type="NCBI Taxonomy" id="561443"/>
    <lineage>
        <taxon>Viruses</taxon>
        <taxon>Varidnaviria</taxon>
        <taxon>Bamfordvirae</taxon>
        <taxon>Nucleocytoviricota</taxon>
        <taxon>Pokkesviricetes</taxon>
        <taxon>Asfuvirales</taxon>
        <taxon>Asfarviridae</taxon>
        <taxon>Asfivirus</taxon>
        <taxon>African swine fever virus</taxon>
    </lineage>
</organism>
<dbReference type="EMBL" id="AY261363">
    <property type="status" value="NOT_ANNOTATED_CDS"/>
    <property type="molecule type" value="Genomic_DNA"/>
</dbReference>
<dbReference type="SMR" id="P0C9X5"/>
<dbReference type="Proteomes" id="UP000000859">
    <property type="component" value="Segment"/>
</dbReference>
<dbReference type="GO" id="GO:0030430">
    <property type="term" value="C:host cell cytoplasm"/>
    <property type="evidence" value="ECO:0007669"/>
    <property type="project" value="UniProtKB-SubCell"/>
</dbReference>
<dbReference type="GO" id="GO:0044423">
    <property type="term" value="C:virion component"/>
    <property type="evidence" value="ECO:0007669"/>
    <property type="project" value="UniProtKB-KW"/>
</dbReference>
<dbReference type="GO" id="GO:0008270">
    <property type="term" value="F:zinc ion binding"/>
    <property type="evidence" value="ECO:0007669"/>
    <property type="project" value="UniProtKB-KW"/>
</dbReference>
<dbReference type="GO" id="GO:0085033">
    <property type="term" value="P:symbiont-mediated activation of host NF-kappaB cascade"/>
    <property type="evidence" value="ECO:0007669"/>
    <property type="project" value="UniProtKB-KW"/>
</dbReference>
<dbReference type="GO" id="GO:0033668">
    <property type="term" value="P:symbiont-mediated suppression of host apoptosis"/>
    <property type="evidence" value="ECO:0007669"/>
    <property type="project" value="UniProtKB-KW"/>
</dbReference>
<dbReference type="CDD" id="cd00022">
    <property type="entry name" value="BIR"/>
    <property type="match status" value="1"/>
</dbReference>
<dbReference type="FunFam" id="1.10.1170.10:FF:000014">
    <property type="entry name" value="IAP-like protein p27"/>
    <property type="match status" value="1"/>
</dbReference>
<dbReference type="Gene3D" id="1.10.1170.10">
    <property type="entry name" value="Inhibitor Of Apoptosis Protein (2mihbC-IAP-1), Chain A"/>
    <property type="match status" value="1"/>
</dbReference>
<dbReference type="InterPro" id="IPR010549">
    <property type="entry name" value="ASFV_p27_C"/>
</dbReference>
<dbReference type="InterPro" id="IPR001370">
    <property type="entry name" value="BIR_rpt"/>
</dbReference>
<dbReference type="Pfam" id="PF06556">
    <property type="entry name" value="ASFV_p27"/>
    <property type="match status" value="1"/>
</dbReference>
<dbReference type="Pfam" id="PF00653">
    <property type="entry name" value="BIR"/>
    <property type="match status" value="1"/>
</dbReference>
<dbReference type="SMART" id="SM00238">
    <property type="entry name" value="BIR"/>
    <property type="match status" value="1"/>
</dbReference>
<dbReference type="SUPFAM" id="SSF57924">
    <property type="entry name" value="Inhibitor of apoptosis (IAP) repeat"/>
    <property type="match status" value="1"/>
</dbReference>
<dbReference type="PROSITE" id="PS01282">
    <property type="entry name" value="BIR_REPEAT_1"/>
    <property type="match status" value="1"/>
</dbReference>
<dbReference type="PROSITE" id="PS50143">
    <property type="entry name" value="BIR_REPEAT_2"/>
    <property type="match status" value="1"/>
</dbReference>